<geneLocation type="chloroplast"/>
<gene>
    <name type="primary">ycf70</name>
</gene>
<feature type="chain" id="PRO_0000288620" description="Uncharacterized protein ycf70">
    <location>
        <begin position="1"/>
        <end position="89"/>
    </location>
</feature>
<proteinExistence type="inferred from homology"/>
<comment type="subcellular location">
    <subcellularLocation>
        <location>Plastid</location>
        <location>Chloroplast</location>
    </subcellularLocation>
</comment>
<comment type="similarity">
    <text evidence="1">Belongs to the ycf70 family.</text>
</comment>
<name>YCF70_ORYSA</name>
<accession>P0C306</accession>
<reference key="1">
    <citation type="journal article" date="2004" name="Plant Physiol.">
        <title>A comparison of rice chloroplast genomes.</title>
        <authorList>
            <person name="Tang J."/>
            <person name="Xia H."/>
            <person name="Cao M."/>
            <person name="Zhang X."/>
            <person name="Zeng W."/>
            <person name="Hu S."/>
            <person name="Tong W."/>
            <person name="Wang J."/>
            <person name="Wang J."/>
            <person name="Yu J."/>
            <person name="Yang H."/>
            <person name="Zhu L."/>
        </authorList>
    </citation>
    <scope>NUCLEOTIDE SEQUENCE [LARGE SCALE GENOMIC DNA]</scope>
    <source>
        <strain>cv. PA64s</strain>
    </source>
</reference>
<protein>
    <recommendedName>
        <fullName>Uncharacterized protein ycf70</fullName>
    </recommendedName>
</protein>
<keyword id="KW-0150">Chloroplast</keyword>
<keyword id="KW-0934">Plastid</keyword>
<dbReference type="EMBL" id="AY522331">
    <property type="status" value="NOT_ANNOTATED_CDS"/>
    <property type="molecule type" value="Genomic_DNA"/>
</dbReference>
<dbReference type="GO" id="GO:0009507">
    <property type="term" value="C:chloroplast"/>
    <property type="evidence" value="ECO:0007669"/>
    <property type="project" value="UniProtKB-SubCell"/>
</dbReference>
<dbReference type="GO" id="GO:0009536">
    <property type="term" value="C:plastid"/>
    <property type="evidence" value="ECO:0000305"/>
    <property type="project" value="Gramene"/>
</dbReference>
<dbReference type="InterPro" id="IPR035337">
    <property type="entry name" value="Ycf70-like"/>
</dbReference>
<dbReference type="Pfam" id="PF17382">
    <property type="entry name" value="Ycf70"/>
    <property type="match status" value="1"/>
</dbReference>
<organism>
    <name type="scientific">Oryza sativa</name>
    <name type="common">Rice</name>
    <dbReference type="NCBI Taxonomy" id="4530"/>
    <lineage>
        <taxon>Eukaryota</taxon>
        <taxon>Viridiplantae</taxon>
        <taxon>Streptophyta</taxon>
        <taxon>Embryophyta</taxon>
        <taxon>Tracheophyta</taxon>
        <taxon>Spermatophyta</taxon>
        <taxon>Magnoliopsida</taxon>
        <taxon>Liliopsida</taxon>
        <taxon>Poales</taxon>
        <taxon>Poaceae</taxon>
        <taxon>BOP clade</taxon>
        <taxon>Oryzoideae</taxon>
        <taxon>Oryzeae</taxon>
        <taxon>Oryzinae</taxon>
        <taxon>Oryza</taxon>
    </lineage>
</organism>
<evidence type="ECO:0000305" key="1"/>
<sequence length="89" mass="10593">MVYGYGKSNMPHPNRKRKGTDTQYDYWEELLVMVSGLYVLFCVFLVLFIFFDSFKQESNKLELSGKEEKKKLNGENRLSRDIQNLLYIK</sequence>